<organism>
    <name type="scientific">Schizosaccharomyces pombe (strain 972 / ATCC 24843)</name>
    <name type="common">Fission yeast</name>
    <dbReference type="NCBI Taxonomy" id="284812"/>
    <lineage>
        <taxon>Eukaryota</taxon>
        <taxon>Fungi</taxon>
        <taxon>Dikarya</taxon>
        <taxon>Ascomycota</taxon>
        <taxon>Taphrinomycotina</taxon>
        <taxon>Schizosaccharomycetes</taxon>
        <taxon>Schizosaccharomycetales</taxon>
        <taxon>Schizosaccharomycetaceae</taxon>
        <taxon>Schizosaccharomyces</taxon>
    </lineage>
</organism>
<sequence length="174" mass="19844">MPAYHSSFLSLTDVPTTGNIAMLPLKTKFRGPAYPADESQMDIIDECIGLFRANCFFRNFEIKGPADRTLIYGTLFISECLGRVNGLNYRDAERQLNSLALENFSIPGSAGFPLNALYAPPLSPQDAEIMRTYLTQFRQELAYRLLSHVYATEKDHPSKWWTCFSKRRFMNKAL</sequence>
<proteinExistence type="evidence at protein level"/>
<evidence type="ECO:0000250" key="1"/>
<evidence type="ECO:0000269" key="2">
    <source>
    </source>
</evidence>
<evidence type="ECO:0000305" key="3"/>
<evidence type="ECO:0007829" key="4">
    <source>
        <dbReference type="PDB" id="8UXW"/>
    </source>
</evidence>
<accession>Q9Y7J4</accession>
<dbReference type="EMBL" id="CU329671">
    <property type="protein sequence ID" value="CAB39803.1"/>
    <property type="molecule type" value="Genomic_DNA"/>
</dbReference>
<dbReference type="PIR" id="T39690">
    <property type="entry name" value="T39690"/>
</dbReference>
<dbReference type="RefSeq" id="NP_596291.1">
    <property type="nucleotide sequence ID" value="NM_001022213.2"/>
</dbReference>
<dbReference type="PDB" id="3DWL">
    <property type="method" value="X-ray"/>
    <property type="resolution" value="3.78 A"/>
    <property type="chains" value="E/J=1-174"/>
</dbReference>
<dbReference type="PDB" id="6W17">
    <property type="method" value="EM"/>
    <property type="resolution" value="3.90 A"/>
    <property type="chains" value="E=1-174"/>
</dbReference>
<dbReference type="PDB" id="6W18">
    <property type="method" value="EM"/>
    <property type="resolution" value="4.20 A"/>
    <property type="chains" value="E=1-174"/>
</dbReference>
<dbReference type="PDB" id="8E9B">
    <property type="method" value="EM"/>
    <property type="resolution" value="3.50 A"/>
    <property type="chains" value="E=1-174"/>
</dbReference>
<dbReference type="PDB" id="8UXW">
    <property type="method" value="EM"/>
    <property type="resolution" value="2.70 A"/>
    <property type="chains" value="E=1-174"/>
</dbReference>
<dbReference type="PDB" id="8UXX">
    <property type="method" value="EM"/>
    <property type="resolution" value="3.20 A"/>
    <property type="chains" value="E=1-174"/>
</dbReference>
<dbReference type="PDBsum" id="3DWL"/>
<dbReference type="PDBsum" id="6W17"/>
<dbReference type="PDBsum" id="6W18"/>
<dbReference type="PDBsum" id="8E9B"/>
<dbReference type="PDBsum" id="8UXW"/>
<dbReference type="PDBsum" id="8UXX"/>
<dbReference type="EMDB" id="EMD-21503"/>
<dbReference type="EMDB" id="EMD-42787"/>
<dbReference type="EMDB" id="EMD-42788"/>
<dbReference type="SMR" id="Q9Y7J4"/>
<dbReference type="BioGRID" id="276681">
    <property type="interactions" value="12"/>
</dbReference>
<dbReference type="ComplexPortal" id="CPX-2474">
    <property type="entry name" value="Actin-related protein 2/3 complex"/>
</dbReference>
<dbReference type="FunCoup" id="Q9Y7J4">
    <property type="interactions" value="242"/>
</dbReference>
<dbReference type="IntAct" id="Q9Y7J4">
    <property type="interactions" value="3"/>
</dbReference>
<dbReference type="STRING" id="284812.Q9Y7J4"/>
<dbReference type="iPTMnet" id="Q9Y7J4"/>
<dbReference type="PaxDb" id="4896-SPBC1778.08c.1"/>
<dbReference type="EnsemblFungi" id="SPBC1778.08c.1">
    <property type="protein sequence ID" value="SPBC1778.08c.1:pep"/>
    <property type="gene ID" value="SPBC1778.08c"/>
</dbReference>
<dbReference type="GeneID" id="2540144"/>
<dbReference type="KEGG" id="spo:2540144"/>
<dbReference type="PomBase" id="SPBC1778.08c">
    <property type="gene designation" value="arc3"/>
</dbReference>
<dbReference type="VEuPathDB" id="FungiDB:SPBC1778.08c"/>
<dbReference type="eggNOG" id="KOG3155">
    <property type="taxonomic scope" value="Eukaryota"/>
</dbReference>
<dbReference type="HOGENOM" id="CLU_094365_2_0_1"/>
<dbReference type="InParanoid" id="Q9Y7J4"/>
<dbReference type="OMA" id="TPSKWWL"/>
<dbReference type="PhylomeDB" id="Q9Y7J4"/>
<dbReference type="Reactome" id="R-SPO-2029482">
    <property type="pathway name" value="Regulation of actin dynamics for phagocytic cup formation"/>
</dbReference>
<dbReference type="Reactome" id="R-SPO-5663213">
    <property type="pathway name" value="RHO GTPases Activate WASPs and WAVEs"/>
</dbReference>
<dbReference type="Reactome" id="R-SPO-8856828">
    <property type="pathway name" value="Clathrin-mediated endocytosis"/>
</dbReference>
<dbReference type="EvolutionaryTrace" id="Q9Y7J4"/>
<dbReference type="PRO" id="PR:Q9Y7J4"/>
<dbReference type="Proteomes" id="UP000002485">
    <property type="component" value="Chromosome II"/>
</dbReference>
<dbReference type="GO" id="GO:0030479">
    <property type="term" value="C:actin cortical patch"/>
    <property type="evidence" value="ECO:0000314"/>
    <property type="project" value="PomBase"/>
</dbReference>
<dbReference type="GO" id="GO:0005885">
    <property type="term" value="C:Arp2/3 protein complex"/>
    <property type="evidence" value="ECO:0000314"/>
    <property type="project" value="PomBase"/>
</dbReference>
<dbReference type="GO" id="GO:0032153">
    <property type="term" value="C:cell division site"/>
    <property type="evidence" value="ECO:0007005"/>
    <property type="project" value="PomBase"/>
</dbReference>
<dbReference type="GO" id="GO:0051286">
    <property type="term" value="C:cell tip"/>
    <property type="evidence" value="ECO:0007005"/>
    <property type="project" value="PomBase"/>
</dbReference>
<dbReference type="GO" id="GO:0005829">
    <property type="term" value="C:cytosol"/>
    <property type="evidence" value="ECO:0007005"/>
    <property type="project" value="PomBase"/>
</dbReference>
<dbReference type="GO" id="GO:0005634">
    <property type="term" value="C:nucleus"/>
    <property type="evidence" value="ECO:0007005"/>
    <property type="project" value="PomBase"/>
</dbReference>
<dbReference type="GO" id="GO:0051015">
    <property type="term" value="F:actin filament binding"/>
    <property type="evidence" value="ECO:0000314"/>
    <property type="project" value="PomBase"/>
</dbReference>
<dbReference type="GO" id="GO:0000147">
    <property type="term" value="P:actin cortical patch assembly"/>
    <property type="evidence" value="ECO:0000305"/>
    <property type="project" value="PomBase"/>
</dbReference>
<dbReference type="GO" id="GO:0044396">
    <property type="term" value="P:actin cortical patch organization"/>
    <property type="evidence" value="ECO:0000315"/>
    <property type="project" value="PomBase"/>
</dbReference>
<dbReference type="GO" id="GO:0090135">
    <property type="term" value="P:actin filament branching"/>
    <property type="evidence" value="ECO:0000269"/>
    <property type="project" value="PomBase"/>
</dbReference>
<dbReference type="GO" id="GO:0034314">
    <property type="term" value="P:Arp2/3 complex-mediated actin nucleation"/>
    <property type="evidence" value="ECO:0000314"/>
    <property type="project" value="PomBase"/>
</dbReference>
<dbReference type="GO" id="GO:0006897">
    <property type="term" value="P:endocytosis"/>
    <property type="evidence" value="ECO:0000315"/>
    <property type="project" value="PomBase"/>
</dbReference>
<dbReference type="GO" id="GO:0007163">
    <property type="term" value="P:establishment or maintenance of cell polarity"/>
    <property type="evidence" value="ECO:0000315"/>
    <property type="project" value="PomBase"/>
</dbReference>
<dbReference type="GO" id="GO:0030833">
    <property type="term" value="P:regulation of actin filament polymerization"/>
    <property type="evidence" value="ECO:0007669"/>
    <property type="project" value="InterPro"/>
</dbReference>
<dbReference type="Gene3D" id="1.10.1760.10">
    <property type="entry name" value="Actin-related protein 2/3 complex subunit 3"/>
    <property type="match status" value="1"/>
</dbReference>
<dbReference type="InterPro" id="IPR007204">
    <property type="entry name" value="ARPC3"/>
</dbReference>
<dbReference type="InterPro" id="IPR036753">
    <property type="entry name" value="ARPC3_sf"/>
</dbReference>
<dbReference type="PANTHER" id="PTHR12391">
    <property type="entry name" value="ARP2/3 COMPLEX 21 KD SUBUNIT"/>
    <property type="match status" value="1"/>
</dbReference>
<dbReference type="Pfam" id="PF04062">
    <property type="entry name" value="P21-Arc"/>
    <property type="match status" value="1"/>
</dbReference>
<dbReference type="PIRSF" id="PIRSF016315">
    <property type="entry name" value="ARP2/3_P21-Arc"/>
    <property type="match status" value="1"/>
</dbReference>
<dbReference type="SUPFAM" id="SSF69060">
    <property type="entry name" value="Arp2/3 complex 21 kDa subunit ARPC3"/>
    <property type="match status" value="1"/>
</dbReference>
<reference key="1">
    <citation type="journal article" date="2002" name="Nature">
        <title>The genome sequence of Schizosaccharomyces pombe.</title>
        <authorList>
            <person name="Wood V."/>
            <person name="Gwilliam R."/>
            <person name="Rajandream M.A."/>
            <person name="Lyne M.H."/>
            <person name="Lyne R."/>
            <person name="Stewart A."/>
            <person name="Sgouros J.G."/>
            <person name="Peat N."/>
            <person name="Hayles J."/>
            <person name="Baker S.G."/>
            <person name="Basham D."/>
            <person name="Bowman S."/>
            <person name="Brooks K."/>
            <person name="Brown D."/>
            <person name="Brown S."/>
            <person name="Chillingworth T."/>
            <person name="Churcher C.M."/>
            <person name="Collins M."/>
            <person name="Connor R."/>
            <person name="Cronin A."/>
            <person name="Davis P."/>
            <person name="Feltwell T."/>
            <person name="Fraser A."/>
            <person name="Gentles S."/>
            <person name="Goble A."/>
            <person name="Hamlin N."/>
            <person name="Harris D.E."/>
            <person name="Hidalgo J."/>
            <person name="Hodgson G."/>
            <person name="Holroyd S."/>
            <person name="Hornsby T."/>
            <person name="Howarth S."/>
            <person name="Huckle E.J."/>
            <person name="Hunt S."/>
            <person name="Jagels K."/>
            <person name="James K.D."/>
            <person name="Jones L."/>
            <person name="Jones M."/>
            <person name="Leather S."/>
            <person name="McDonald S."/>
            <person name="McLean J."/>
            <person name="Mooney P."/>
            <person name="Moule S."/>
            <person name="Mungall K.L."/>
            <person name="Murphy L.D."/>
            <person name="Niblett D."/>
            <person name="Odell C."/>
            <person name="Oliver K."/>
            <person name="O'Neil S."/>
            <person name="Pearson D."/>
            <person name="Quail M.A."/>
            <person name="Rabbinowitsch E."/>
            <person name="Rutherford K.M."/>
            <person name="Rutter S."/>
            <person name="Saunders D."/>
            <person name="Seeger K."/>
            <person name="Sharp S."/>
            <person name="Skelton J."/>
            <person name="Simmonds M.N."/>
            <person name="Squares R."/>
            <person name="Squares S."/>
            <person name="Stevens K."/>
            <person name="Taylor K."/>
            <person name="Taylor R.G."/>
            <person name="Tivey A."/>
            <person name="Walsh S.V."/>
            <person name="Warren T."/>
            <person name="Whitehead S."/>
            <person name="Woodward J.R."/>
            <person name="Volckaert G."/>
            <person name="Aert R."/>
            <person name="Robben J."/>
            <person name="Grymonprez B."/>
            <person name="Weltjens I."/>
            <person name="Vanstreels E."/>
            <person name="Rieger M."/>
            <person name="Schaefer M."/>
            <person name="Mueller-Auer S."/>
            <person name="Gabel C."/>
            <person name="Fuchs M."/>
            <person name="Duesterhoeft A."/>
            <person name="Fritzc C."/>
            <person name="Holzer E."/>
            <person name="Moestl D."/>
            <person name="Hilbert H."/>
            <person name="Borzym K."/>
            <person name="Langer I."/>
            <person name="Beck A."/>
            <person name="Lehrach H."/>
            <person name="Reinhardt R."/>
            <person name="Pohl T.M."/>
            <person name="Eger P."/>
            <person name="Zimmermann W."/>
            <person name="Wedler H."/>
            <person name="Wambutt R."/>
            <person name="Purnelle B."/>
            <person name="Goffeau A."/>
            <person name="Cadieu E."/>
            <person name="Dreano S."/>
            <person name="Gloux S."/>
            <person name="Lelaure V."/>
            <person name="Mottier S."/>
            <person name="Galibert F."/>
            <person name="Aves S.J."/>
            <person name="Xiang Z."/>
            <person name="Hunt C."/>
            <person name="Moore K."/>
            <person name="Hurst S.M."/>
            <person name="Lucas M."/>
            <person name="Rochet M."/>
            <person name="Gaillardin C."/>
            <person name="Tallada V.A."/>
            <person name="Garzon A."/>
            <person name="Thode G."/>
            <person name="Daga R.R."/>
            <person name="Cruzado L."/>
            <person name="Jimenez J."/>
            <person name="Sanchez M."/>
            <person name="del Rey F."/>
            <person name="Benito J."/>
            <person name="Dominguez A."/>
            <person name="Revuelta J.L."/>
            <person name="Moreno S."/>
            <person name="Armstrong J."/>
            <person name="Forsburg S.L."/>
            <person name="Cerutti L."/>
            <person name="Lowe T."/>
            <person name="McCombie W.R."/>
            <person name="Paulsen I."/>
            <person name="Potashkin J."/>
            <person name="Shpakovski G.V."/>
            <person name="Ussery D."/>
            <person name="Barrell B.G."/>
            <person name="Nurse P."/>
        </authorList>
    </citation>
    <scope>NUCLEOTIDE SEQUENCE [LARGE SCALE GENOMIC DNA]</scope>
    <source>
        <strain>972 / ATCC 24843</strain>
    </source>
</reference>
<reference key="2">
    <citation type="journal article" date="1999" name="Mol. Biol. Cell">
        <title>A mutant of arp2p causes partial disassembly of the Arp2/3 complex and loss of cortical actin function in fission yeast.</title>
        <authorList>
            <person name="Morrell J.L."/>
            <person name="Morphew M."/>
            <person name="Gould K.L."/>
        </authorList>
    </citation>
    <scope>IDENTIFICATION IN THE ARP2/3 COMPLEX</scope>
</reference>
<feature type="chain" id="PRO_0000124047" description="Actin-related protein 2/3 complex subunit 3">
    <location>
        <begin position="1"/>
        <end position="174"/>
    </location>
</feature>
<feature type="helix" evidence="4">
    <location>
        <begin position="7"/>
        <end position="10"/>
    </location>
</feature>
<feature type="helix" evidence="4">
    <location>
        <begin position="43"/>
        <end position="54"/>
    </location>
</feature>
<feature type="helix" evidence="4">
    <location>
        <begin position="65"/>
        <end position="83"/>
    </location>
</feature>
<feature type="helix" evidence="4">
    <location>
        <begin position="89"/>
        <end position="101"/>
    </location>
</feature>
<feature type="turn" evidence="4">
    <location>
        <begin position="113"/>
        <end position="117"/>
    </location>
</feature>
<feature type="helix" evidence="4">
    <location>
        <begin position="126"/>
        <end position="149"/>
    </location>
</feature>
<feature type="strand" evidence="4">
    <location>
        <begin position="154"/>
        <end position="156"/>
    </location>
</feature>
<feature type="helix" evidence="4">
    <location>
        <begin position="159"/>
        <end position="162"/>
    </location>
</feature>
<feature type="helix" evidence="4">
    <location>
        <begin position="163"/>
        <end position="166"/>
    </location>
</feature>
<feature type="helix" evidence="4">
    <location>
        <begin position="169"/>
        <end position="171"/>
    </location>
</feature>
<comment type="function">
    <text evidence="1">Functions as a component of the Arp2/3 complex which is involved in regulation of actin polymerization and together with an activating nucleation-promoting factor (NPF) mediates the formation of branched actin networks.</text>
</comment>
<comment type="subunit">
    <text evidence="2">Component of the Arp2/3 complex composed of arp2, act2, arc1/p41-ARC, arc2/p34-ARC, arc3/p21-ARC, arc4/p20-ARC and arc5/p16-ARC.</text>
</comment>
<comment type="subcellular location">
    <subcellularLocation>
        <location>Cytoplasm</location>
        <location>Cytoskeleton</location>
        <location>Actin patch</location>
    </subcellularLocation>
</comment>
<comment type="similarity">
    <text evidence="3">Belongs to the ARPC3 family.</text>
</comment>
<keyword id="KW-0002">3D-structure</keyword>
<keyword id="KW-0009">Actin-binding</keyword>
<keyword id="KW-0963">Cytoplasm</keyword>
<keyword id="KW-0206">Cytoskeleton</keyword>
<keyword id="KW-1185">Reference proteome</keyword>
<protein>
    <recommendedName>
        <fullName>Actin-related protein 2/3 complex subunit 3</fullName>
    </recommendedName>
    <alternativeName>
        <fullName>Arp2/3 complex 21 kDa subunit</fullName>
        <shortName>p21-ARC</shortName>
    </alternativeName>
</protein>
<gene>
    <name type="primary">arc3</name>
    <name type="synonym">arc21</name>
    <name type="ORF">SPBC1778.08c</name>
</gene>
<name>ARPC3_SCHPO</name>